<comment type="function">
    <text evidence="1">One of the primary rRNA binding proteins, it binds directly to 16S rRNA central domain where it helps coordinate assembly of the platform of the 30S subunit.</text>
</comment>
<comment type="subunit">
    <text evidence="1">Part of the 30S ribosomal subunit. Contacts proteins S5 and S12.</text>
</comment>
<comment type="similarity">
    <text evidence="1">Belongs to the universal ribosomal protein uS8 family.</text>
</comment>
<reference key="1">
    <citation type="journal article" date="2007" name="Genes Dev.">
        <title>New insights into Acinetobacter baumannii pathogenesis revealed by high-density pyrosequencing and transposon mutagenesis.</title>
        <authorList>
            <person name="Smith M.G."/>
            <person name="Gianoulis T.A."/>
            <person name="Pukatzki S."/>
            <person name="Mekalanos J.J."/>
            <person name="Ornston L.N."/>
            <person name="Gerstein M."/>
            <person name="Snyder M."/>
        </authorList>
    </citation>
    <scope>NUCLEOTIDE SEQUENCE [LARGE SCALE GENOMIC DNA]</scope>
    <source>
        <strain>ATCC 17978 / DSM 105126 / CIP 53.77 / LMG 1025 / NCDC KC755 / 5377</strain>
    </source>
</reference>
<sequence>MSMQDTVADMLTRVRNAQMAKKQTVSMPSSKLKVAIANVLQQEGYISNVEVAQEETKSTLTITLKYFEGKPVIEMVKRVSRPGLRQYRGKDKLPSVKQGLGIAIVSTSKGIMTDRAARAAGIGGEVIAFVS</sequence>
<feature type="chain" id="PRO_0000305732" description="Small ribosomal subunit protein uS8">
    <location>
        <begin position="1"/>
        <end position="131"/>
    </location>
</feature>
<evidence type="ECO:0000255" key="1">
    <source>
        <dbReference type="HAMAP-Rule" id="MF_01302"/>
    </source>
</evidence>
<evidence type="ECO:0000305" key="2"/>
<protein>
    <recommendedName>
        <fullName evidence="1">Small ribosomal subunit protein uS8</fullName>
    </recommendedName>
    <alternativeName>
        <fullName evidence="2">30S ribosomal protein S8</fullName>
    </alternativeName>
</protein>
<accession>A3M970</accession>
<name>RS8_ACIBT</name>
<organism>
    <name type="scientific">Acinetobacter baumannii (strain ATCC 17978 / DSM 105126 / CIP 53.77 / LMG 1025 / NCDC KC755 / 5377)</name>
    <dbReference type="NCBI Taxonomy" id="400667"/>
    <lineage>
        <taxon>Bacteria</taxon>
        <taxon>Pseudomonadati</taxon>
        <taxon>Pseudomonadota</taxon>
        <taxon>Gammaproteobacteria</taxon>
        <taxon>Moraxellales</taxon>
        <taxon>Moraxellaceae</taxon>
        <taxon>Acinetobacter</taxon>
        <taxon>Acinetobacter calcoaceticus/baumannii complex</taxon>
    </lineage>
</organism>
<proteinExistence type="inferred from homology"/>
<gene>
    <name evidence="1" type="primary">rpsH</name>
    <name type="ordered locus">A1S_3067</name>
</gene>
<dbReference type="EMBL" id="CP000521">
    <property type="protein sequence ID" value="ABO13464.2"/>
    <property type="molecule type" value="Genomic_DNA"/>
</dbReference>
<dbReference type="RefSeq" id="WP_000062616.1">
    <property type="nucleotide sequence ID" value="NZ_CP053098.1"/>
</dbReference>
<dbReference type="SMR" id="A3M970"/>
<dbReference type="GeneID" id="92895303"/>
<dbReference type="KEGG" id="acb:A1S_3067"/>
<dbReference type="HOGENOM" id="CLU_098428_0_0_6"/>
<dbReference type="GO" id="GO:1990904">
    <property type="term" value="C:ribonucleoprotein complex"/>
    <property type="evidence" value="ECO:0007669"/>
    <property type="project" value="UniProtKB-KW"/>
</dbReference>
<dbReference type="GO" id="GO:0005840">
    <property type="term" value="C:ribosome"/>
    <property type="evidence" value="ECO:0007669"/>
    <property type="project" value="UniProtKB-KW"/>
</dbReference>
<dbReference type="GO" id="GO:0019843">
    <property type="term" value="F:rRNA binding"/>
    <property type="evidence" value="ECO:0007669"/>
    <property type="project" value="UniProtKB-UniRule"/>
</dbReference>
<dbReference type="GO" id="GO:0003735">
    <property type="term" value="F:structural constituent of ribosome"/>
    <property type="evidence" value="ECO:0007669"/>
    <property type="project" value="InterPro"/>
</dbReference>
<dbReference type="GO" id="GO:0006412">
    <property type="term" value="P:translation"/>
    <property type="evidence" value="ECO:0007669"/>
    <property type="project" value="UniProtKB-UniRule"/>
</dbReference>
<dbReference type="FunFam" id="3.30.1370.30:FF:000002">
    <property type="entry name" value="30S ribosomal protein S8"/>
    <property type="match status" value="1"/>
</dbReference>
<dbReference type="FunFam" id="3.30.1490.10:FF:000001">
    <property type="entry name" value="30S ribosomal protein S8"/>
    <property type="match status" value="1"/>
</dbReference>
<dbReference type="Gene3D" id="3.30.1370.30">
    <property type="match status" value="1"/>
</dbReference>
<dbReference type="Gene3D" id="3.30.1490.10">
    <property type="match status" value="1"/>
</dbReference>
<dbReference type="HAMAP" id="MF_01302_B">
    <property type="entry name" value="Ribosomal_uS8_B"/>
    <property type="match status" value="1"/>
</dbReference>
<dbReference type="InterPro" id="IPR000630">
    <property type="entry name" value="Ribosomal_uS8"/>
</dbReference>
<dbReference type="InterPro" id="IPR047863">
    <property type="entry name" value="Ribosomal_uS8_CS"/>
</dbReference>
<dbReference type="InterPro" id="IPR035987">
    <property type="entry name" value="Ribosomal_uS8_sf"/>
</dbReference>
<dbReference type="NCBIfam" id="NF001109">
    <property type="entry name" value="PRK00136.1"/>
    <property type="match status" value="1"/>
</dbReference>
<dbReference type="PANTHER" id="PTHR11758">
    <property type="entry name" value="40S RIBOSOMAL PROTEIN S15A"/>
    <property type="match status" value="1"/>
</dbReference>
<dbReference type="Pfam" id="PF00410">
    <property type="entry name" value="Ribosomal_S8"/>
    <property type="match status" value="1"/>
</dbReference>
<dbReference type="SUPFAM" id="SSF56047">
    <property type="entry name" value="Ribosomal protein S8"/>
    <property type="match status" value="1"/>
</dbReference>
<dbReference type="PROSITE" id="PS00053">
    <property type="entry name" value="RIBOSOMAL_S8"/>
    <property type="match status" value="1"/>
</dbReference>
<keyword id="KW-0687">Ribonucleoprotein</keyword>
<keyword id="KW-0689">Ribosomal protein</keyword>
<keyword id="KW-0694">RNA-binding</keyword>
<keyword id="KW-0699">rRNA-binding</keyword>